<organismHost>
    <name type="scientific">Homo sapiens</name>
    <name type="common">Human</name>
    <dbReference type="NCBI Taxonomy" id="9606"/>
</organismHost>
<sequence>MNNTIINSLIGGDDSIKRSNVFAVDSQIPTLYMPQYISLSGVMTNNGPDNQTIASFEIRDQYITALNHLVLSLELPEVKGMGRFGYVPYVGYKCINHVSVSSCNGVIWEIEGEELYNNCINNTIALKHSGYSSELNDISIGLTPNDTIKEPSTVYVYIKTPFDVEDTFSSLKLSDSKITVTVTFNPVSDIVIRDSSFDFETFNKEFVYVPELSFIGYMVKNVQIKPSFIEKPRRVIGQINQPTATVTEVHAATSLSVYTKPYYGNTDNKFISYPGYSQDEKDYIDAYVSRLLDDLVIVSDGPPTGYPESAEIVEVPEDGIVSIQDADVYVKIDNVPDNMSVYLHTNLLMFGTRKNSFIYNISKKFSAITGTYSDATKRTVFAHISHSINIIDTSIPVSLWTSQRNVYNGDNRSAESKAKDLFINDPFIKGIDFKNKTDIISRLEVRFGNDVLYSENGPISRIYNELLTKSNNGTRTLTFNFTPKIFFRPTTITANVSRGKDKLSVRVVYSTMDVNHPIYYVQKQLVVVCNDLYKVSYDQGVSITKIMGDNN</sequence>
<dbReference type="EMBL" id="X69198">
    <property type="protein sequence ID" value="CAA49044.1"/>
    <property type="molecule type" value="Genomic_DNA"/>
</dbReference>
<dbReference type="PIR" id="A36848">
    <property type="entry name" value="A36848"/>
</dbReference>
<dbReference type="SMR" id="P0DSP6"/>
<dbReference type="KEGG" id="vg:1486477"/>
<dbReference type="Proteomes" id="UP000002060">
    <property type="component" value="Segment"/>
</dbReference>
<dbReference type="GO" id="GO:0016020">
    <property type="term" value="C:membrane"/>
    <property type="evidence" value="ECO:0007669"/>
    <property type="project" value="UniProtKB-SubCell"/>
</dbReference>
<dbReference type="GO" id="GO:0046677">
    <property type="term" value="P:response to antibiotic"/>
    <property type="evidence" value="ECO:0007669"/>
    <property type="project" value="InterPro"/>
</dbReference>
<dbReference type="Gene3D" id="2.70.9.10">
    <property type="entry name" value="Adenovirus Type 2 Hexon, domain 4"/>
    <property type="match status" value="1"/>
</dbReference>
<dbReference type="InterPro" id="IPR005008">
    <property type="entry name" value="Poxvirus_Rif-R"/>
</dbReference>
<dbReference type="Pfam" id="PF03340">
    <property type="entry name" value="Pox_Rif"/>
    <property type="match status" value="1"/>
</dbReference>
<gene>
    <name type="primary">OPG125</name>
    <name type="ORF">D13L</name>
</gene>
<keyword id="KW-0472">Membrane</keyword>
<keyword id="KW-1185">Reference proteome</keyword>
<accession>P0DSP6</accession>
<accession>P33810</accession>
<name>PG125_VAR67</name>
<reference key="1">
    <citation type="journal article" date="1993" name="FEBS Lett.">
        <title>Genes of variola and vaccinia viruses necessary to overcome the host protective mechanisms.</title>
        <authorList>
            <person name="Shchelkunov S.N."/>
            <person name="Blinov V.M."/>
            <person name="Sandakhchiev L.S."/>
        </authorList>
    </citation>
    <scope>NUCLEOTIDE SEQUENCE [LARGE SCALE GENOMIC DNA]</scope>
</reference>
<protein>
    <recommendedName>
        <fullName>Scaffold protein OPG125</fullName>
    </recommendedName>
    <alternativeName>
        <fullName>62 kDa protein</fullName>
    </alternativeName>
    <alternativeName>
        <fullName>Rifampicin resistance protein</fullName>
    </alternativeName>
</protein>
<feature type="chain" id="PRO_0000099128" description="Scaffold protein OPG125">
    <location>
        <begin position="1"/>
        <end position="551"/>
    </location>
</feature>
<comment type="function">
    <text evidence="1">Scaffold protein which forms a transitory spherical honeycomb lattice providing curvature and rigidity to the convex membrane of crescent and immature virions (IV). This association occurs concomitantly with viral membrane formation. Targeted by the drug rifampicin, which prevents the formation of this lattice, and hence virus morphogenesis. In the presence of rifampicin, irregularly shaped membranes that lack the honeycomb layer accumulate around areas of electron-dense viroplasm. This layer is lost from virions during maturation from IV to mature virion (MV), through the proteolysis of OPG158 N-terminus.</text>
</comment>
<comment type="subunit">
    <text evidence="1">Homotrimer. Self-assembles to form a layer. Interacts with OPG158 (via N-terminus); this interaction is necessary for OPG125 association with membranes.</text>
</comment>
<comment type="subcellular location">
    <subcellularLocation>
        <location evidence="1">Membrane</location>
        <topology evidence="1">Peripheral membrane protein</topology>
    </subcellularLocation>
    <text evidence="1">Associates transitorily with crescent and IV membranes.</text>
</comment>
<comment type="induction">
    <text>Expressed in the early phase of the viral replicative cycle.</text>
</comment>
<comment type="miscellaneous">
    <text>Displays structure similarities to capsid proteins.</text>
</comment>
<comment type="similarity">
    <text evidence="2">Belongs to the orthopoxvirus protein OPG125 family.</text>
</comment>
<evidence type="ECO:0000250" key="1">
    <source>
        <dbReference type="UniProtKB" id="P68440"/>
    </source>
</evidence>
<evidence type="ECO:0000305" key="2"/>
<proteinExistence type="evidence at transcript level"/>
<organism>
    <name type="scientific">Variola virus (isolate Human/India/Ind3/1967)</name>
    <name type="common">VARV</name>
    <name type="synonym">Smallpox virus</name>
    <dbReference type="NCBI Taxonomy" id="587200"/>
    <lineage>
        <taxon>Viruses</taxon>
        <taxon>Varidnaviria</taxon>
        <taxon>Bamfordvirae</taxon>
        <taxon>Nucleocytoviricota</taxon>
        <taxon>Pokkesviricetes</taxon>
        <taxon>Chitovirales</taxon>
        <taxon>Poxviridae</taxon>
        <taxon>Chordopoxvirinae</taxon>
        <taxon>Orthopoxvirus</taxon>
        <taxon>Variola virus</taxon>
    </lineage>
</organism>